<sequence length="260" mass="29777">MLNILKNWKNQQTAASNLERYTKEDILKGEIPEHIAIIMDGNGRWAKKRSLPRIAGHHEGMKVVKRTTKLANELGVKVLTLYAFSTENWKRPKMEVDFLMKLPEEFLNTYLPELVEENVQVRIIGDETALPAHTLRAIEKAVQDTAQNDGMILNFALNYGGRTEIVSAAKSLAEKVKEGSLNIEDIDESLFSTYLMTESLQDPELLIRTSGEIRLSNFMLWQVAYSEFVFTDVLWPDFKEDHFLQALGEFQQRGRRFGGI</sequence>
<organism>
    <name type="scientific">Bacillus subtilis (strain 168)</name>
    <dbReference type="NCBI Taxonomy" id="224308"/>
    <lineage>
        <taxon>Bacteria</taxon>
        <taxon>Bacillati</taxon>
        <taxon>Bacillota</taxon>
        <taxon>Bacilli</taxon>
        <taxon>Bacillales</taxon>
        <taxon>Bacillaceae</taxon>
        <taxon>Bacillus</taxon>
    </lineage>
</organism>
<reference key="1">
    <citation type="journal article" date="1997" name="Nature">
        <title>The complete genome sequence of the Gram-positive bacterium Bacillus subtilis.</title>
        <authorList>
            <person name="Kunst F."/>
            <person name="Ogasawara N."/>
            <person name="Moszer I."/>
            <person name="Albertini A.M."/>
            <person name="Alloni G."/>
            <person name="Azevedo V."/>
            <person name="Bertero M.G."/>
            <person name="Bessieres P."/>
            <person name="Bolotin A."/>
            <person name="Borchert S."/>
            <person name="Borriss R."/>
            <person name="Boursier L."/>
            <person name="Brans A."/>
            <person name="Braun M."/>
            <person name="Brignell S.C."/>
            <person name="Bron S."/>
            <person name="Brouillet S."/>
            <person name="Bruschi C.V."/>
            <person name="Caldwell B."/>
            <person name="Capuano V."/>
            <person name="Carter N.M."/>
            <person name="Choi S.-K."/>
            <person name="Codani J.-J."/>
            <person name="Connerton I.F."/>
            <person name="Cummings N.J."/>
            <person name="Daniel R.A."/>
            <person name="Denizot F."/>
            <person name="Devine K.M."/>
            <person name="Duesterhoeft A."/>
            <person name="Ehrlich S.D."/>
            <person name="Emmerson P.T."/>
            <person name="Entian K.-D."/>
            <person name="Errington J."/>
            <person name="Fabret C."/>
            <person name="Ferrari E."/>
            <person name="Foulger D."/>
            <person name="Fritz C."/>
            <person name="Fujita M."/>
            <person name="Fujita Y."/>
            <person name="Fuma S."/>
            <person name="Galizzi A."/>
            <person name="Galleron N."/>
            <person name="Ghim S.-Y."/>
            <person name="Glaser P."/>
            <person name="Goffeau A."/>
            <person name="Golightly E.J."/>
            <person name="Grandi G."/>
            <person name="Guiseppi G."/>
            <person name="Guy B.J."/>
            <person name="Haga K."/>
            <person name="Haiech J."/>
            <person name="Harwood C.R."/>
            <person name="Henaut A."/>
            <person name="Hilbert H."/>
            <person name="Holsappel S."/>
            <person name="Hosono S."/>
            <person name="Hullo M.-F."/>
            <person name="Itaya M."/>
            <person name="Jones L.-M."/>
            <person name="Joris B."/>
            <person name="Karamata D."/>
            <person name="Kasahara Y."/>
            <person name="Klaerr-Blanchard M."/>
            <person name="Klein C."/>
            <person name="Kobayashi Y."/>
            <person name="Koetter P."/>
            <person name="Koningstein G."/>
            <person name="Krogh S."/>
            <person name="Kumano M."/>
            <person name="Kurita K."/>
            <person name="Lapidus A."/>
            <person name="Lardinois S."/>
            <person name="Lauber J."/>
            <person name="Lazarevic V."/>
            <person name="Lee S.-M."/>
            <person name="Levine A."/>
            <person name="Liu H."/>
            <person name="Masuda S."/>
            <person name="Mauel C."/>
            <person name="Medigue C."/>
            <person name="Medina N."/>
            <person name="Mellado R.P."/>
            <person name="Mizuno M."/>
            <person name="Moestl D."/>
            <person name="Nakai S."/>
            <person name="Noback M."/>
            <person name="Noone D."/>
            <person name="O'Reilly M."/>
            <person name="Ogawa K."/>
            <person name="Ogiwara A."/>
            <person name="Oudega B."/>
            <person name="Park S.-H."/>
            <person name="Parro V."/>
            <person name="Pohl T.M."/>
            <person name="Portetelle D."/>
            <person name="Porwollik S."/>
            <person name="Prescott A.M."/>
            <person name="Presecan E."/>
            <person name="Pujic P."/>
            <person name="Purnelle B."/>
            <person name="Rapoport G."/>
            <person name="Rey M."/>
            <person name="Reynolds S."/>
            <person name="Rieger M."/>
            <person name="Rivolta C."/>
            <person name="Rocha E."/>
            <person name="Roche B."/>
            <person name="Rose M."/>
            <person name="Sadaie Y."/>
            <person name="Sato T."/>
            <person name="Scanlan E."/>
            <person name="Schleich S."/>
            <person name="Schroeter R."/>
            <person name="Scoffone F."/>
            <person name="Sekiguchi J."/>
            <person name="Sekowska A."/>
            <person name="Seror S.J."/>
            <person name="Serror P."/>
            <person name="Shin B.-S."/>
            <person name="Soldo B."/>
            <person name="Sorokin A."/>
            <person name="Tacconi E."/>
            <person name="Takagi T."/>
            <person name="Takahashi H."/>
            <person name="Takemaru K."/>
            <person name="Takeuchi M."/>
            <person name="Tamakoshi A."/>
            <person name="Tanaka T."/>
            <person name="Terpstra P."/>
            <person name="Tognoni A."/>
            <person name="Tosato V."/>
            <person name="Uchiyama S."/>
            <person name="Vandenbol M."/>
            <person name="Vannier F."/>
            <person name="Vassarotti A."/>
            <person name="Viari A."/>
            <person name="Wambutt R."/>
            <person name="Wedler E."/>
            <person name="Wedler H."/>
            <person name="Weitzenegger T."/>
            <person name="Winters P."/>
            <person name="Wipat A."/>
            <person name="Yamamoto H."/>
            <person name="Yamane K."/>
            <person name="Yasumoto K."/>
            <person name="Yata K."/>
            <person name="Yoshida K."/>
            <person name="Yoshikawa H.-F."/>
            <person name="Zumstein E."/>
            <person name="Yoshikawa H."/>
            <person name="Danchin A."/>
        </authorList>
    </citation>
    <scope>NUCLEOTIDE SEQUENCE [LARGE SCALE GENOMIC DNA]</scope>
    <source>
        <strain>168</strain>
    </source>
</reference>
<feature type="chain" id="PRO_0000123572" description="Isoprenyl transferase">
    <location>
        <begin position="1"/>
        <end position="260"/>
    </location>
</feature>
<feature type="active site" evidence="1">
    <location>
        <position position="40"/>
    </location>
</feature>
<feature type="active site" description="Proton acceptor" evidence="1">
    <location>
        <position position="88"/>
    </location>
</feature>
<feature type="binding site" evidence="1">
    <location>
        <position position="40"/>
    </location>
    <ligand>
        <name>Mg(2+)</name>
        <dbReference type="ChEBI" id="CHEBI:18420"/>
    </ligand>
</feature>
<feature type="binding site" evidence="1">
    <location>
        <begin position="41"/>
        <end position="44"/>
    </location>
    <ligand>
        <name>substrate</name>
    </ligand>
</feature>
<feature type="binding site" evidence="1">
    <location>
        <position position="45"/>
    </location>
    <ligand>
        <name>substrate</name>
    </ligand>
</feature>
<feature type="binding site" evidence="1">
    <location>
        <position position="53"/>
    </location>
    <ligand>
        <name>substrate</name>
    </ligand>
</feature>
<feature type="binding site" evidence="1">
    <location>
        <position position="57"/>
    </location>
    <ligand>
        <name>substrate</name>
    </ligand>
</feature>
<feature type="binding site" evidence="1">
    <location>
        <begin position="85"/>
        <end position="87"/>
    </location>
    <ligand>
        <name>substrate</name>
    </ligand>
</feature>
<feature type="binding site" evidence="1">
    <location>
        <position position="89"/>
    </location>
    <ligand>
        <name>substrate</name>
    </ligand>
</feature>
<feature type="binding site" evidence="1">
    <location>
        <position position="91"/>
    </location>
    <ligand>
        <name>substrate</name>
    </ligand>
</feature>
<feature type="binding site" evidence="1">
    <location>
        <position position="208"/>
    </location>
    <ligand>
        <name>substrate</name>
    </ligand>
</feature>
<feature type="binding site" evidence="1">
    <location>
        <begin position="214"/>
        <end position="216"/>
    </location>
    <ligand>
        <name>substrate</name>
    </ligand>
</feature>
<feature type="binding site" evidence="1">
    <location>
        <position position="227"/>
    </location>
    <ligand>
        <name>Mg(2+)</name>
        <dbReference type="ChEBI" id="CHEBI:18420"/>
    </ligand>
</feature>
<feature type="helix" evidence="2">
    <location>
        <begin position="23"/>
        <end position="27"/>
    </location>
</feature>
<feature type="strand" evidence="2">
    <location>
        <begin position="33"/>
        <end position="38"/>
    </location>
</feature>
<feature type="helix" evidence="2">
    <location>
        <begin position="42"/>
        <end position="48"/>
    </location>
</feature>
<feature type="helix" evidence="2">
    <location>
        <begin position="53"/>
        <end position="73"/>
    </location>
</feature>
<feature type="strand" evidence="2">
    <location>
        <begin position="77"/>
        <end position="82"/>
    </location>
</feature>
<feature type="helix" evidence="2">
    <location>
        <begin position="86"/>
        <end position="88"/>
    </location>
</feature>
<feature type="helix" evidence="2">
    <location>
        <begin position="93"/>
        <end position="116"/>
    </location>
</feature>
<feature type="strand" evidence="2">
    <location>
        <begin position="120"/>
        <end position="125"/>
    </location>
</feature>
<feature type="helix" evidence="2">
    <location>
        <begin position="127"/>
        <end position="129"/>
    </location>
</feature>
<feature type="helix" evidence="2">
    <location>
        <begin position="132"/>
        <end position="145"/>
    </location>
</feature>
<feature type="strand" evidence="2">
    <location>
        <begin position="152"/>
        <end position="156"/>
    </location>
</feature>
<feature type="helix" evidence="2">
    <location>
        <begin position="161"/>
        <end position="178"/>
    </location>
</feature>
<feature type="helix" evidence="2">
    <location>
        <begin position="183"/>
        <end position="185"/>
    </location>
</feature>
<feature type="helix" evidence="2">
    <location>
        <begin position="188"/>
        <end position="192"/>
    </location>
</feature>
<feature type="turn" evidence="2">
    <location>
        <begin position="196"/>
        <end position="199"/>
    </location>
</feature>
<feature type="strand" evidence="2">
    <location>
        <begin position="204"/>
        <end position="208"/>
    </location>
</feature>
<feature type="strand" evidence="3">
    <location>
        <begin position="217"/>
        <end position="219"/>
    </location>
</feature>
<feature type="turn" evidence="2">
    <location>
        <begin position="220"/>
        <end position="225"/>
    </location>
</feature>
<feature type="strand" evidence="2">
    <location>
        <begin position="227"/>
        <end position="230"/>
    </location>
</feature>
<feature type="helix" evidence="2">
    <location>
        <begin position="235"/>
        <end position="237"/>
    </location>
</feature>
<feature type="helix" evidence="2">
    <location>
        <begin position="240"/>
        <end position="254"/>
    </location>
</feature>
<accession>O31751</accession>
<keyword id="KW-0002">3D-structure</keyword>
<keyword id="KW-0460">Magnesium</keyword>
<keyword id="KW-0479">Metal-binding</keyword>
<keyword id="KW-1185">Reference proteome</keyword>
<keyword id="KW-0808">Transferase</keyword>
<dbReference type="EC" id="2.5.1.-" evidence="1"/>
<dbReference type="EMBL" id="AL009126">
    <property type="protein sequence ID" value="CAB13526.1"/>
    <property type="molecule type" value="Genomic_DNA"/>
</dbReference>
<dbReference type="PIR" id="A69881">
    <property type="entry name" value="A69881"/>
</dbReference>
<dbReference type="RefSeq" id="NP_389535.1">
    <property type="nucleotide sequence ID" value="NC_000964.3"/>
</dbReference>
<dbReference type="RefSeq" id="WP_003231925.1">
    <property type="nucleotide sequence ID" value="NZ_OZ025638.1"/>
</dbReference>
<dbReference type="PDB" id="7JLI">
    <property type="method" value="X-ray"/>
    <property type="resolution" value="1.80 A"/>
    <property type="chains" value="A=1-260"/>
</dbReference>
<dbReference type="PDB" id="7JLJ">
    <property type="method" value="X-ray"/>
    <property type="resolution" value="3.10 A"/>
    <property type="chains" value="A=1-260"/>
</dbReference>
<dbReference type="PDB" id="7JLM">
    <property type="method" value="X-ray"/>
    <property type="resolution" value="2.30 A"/>
    <property type="chains" value="A/B=1-260"/>
</dbReference>
<dbReference type="PDB" id="7JLR">
    <property type="method" value="X-ray"/>
    <property type="resolution" value="2.20 A"/>
    <property type="chains" value="A=1-260"/>
</dbReference>
<dbReference type="PDBsum" id="7JLI"/>
<dbReference type="PDBsum" id="7JLJ"/>
<dbReference type="PDBsum" id="7JLM"/>
<dbReference type="PDBsum" id="7JLR"/>
<dbReference type="SMR" id="O31751"/>
<dbReference type="FunCoup" id="O31751">
    <property type="interactions" value="618"/>
</dbReference>
<dbReference type="STRING" id="224308.BSU16530"/>
<dbReference type="PaxDb" id="224308-BSU16530"/>
<dbReference type="EnsemblBacteria" id="CAB13526">
    <property type="protein sequence ID" value="CAB13526"/>
    <property type="gene ID" value="BSU_16530"/>
</dbReference>
<dbReference type="GeneID" id="939640"/>
<dbReference type="KEGG" id="bsu:BSU16530"/>
<dbReference type="PATRIC" id="fig|224308.179.peg.1794"/>
<dbReference type="eggNOG" id="COG0020">
    <property type="taxonomic scope" value="Bacteria"/>
</dbReference>
<dbReference type="InParanoid" id="O31751"/>
<dbReference type="OrthoDB" id="4191603at2"/>
<dbReference type="PhylomeDB" id="O31751"/>
<dbReference type="BioCyc" id="BSUB:BSU16530-MONOMER"/>
<dbReference type="BRENDA" id="2.5.1.31">
    <property type="organism ID" value="658"/>
</dbReference>
<dbReference type="SABIO-RK" id="O31751"/>
<dbReference type="Proteomes" id="UP000001570">
    <property type="component" value="Chromosome"/>
</dbReference>
<dbReference type="GO" id="GO:0005829">
    <property type="term" value="C:cytosol"/>
    <property type="evidence" value="ECO:0000318"/>
    <property type="project" value="GO_Central"/>
</dbReference>
<dbReference type="GO" id="GO:0008834">
    <property type="term" value="F:ditrans,polycis-undecaprenyl-diphosphate synthase [(2E,6E)-farnesyl-diphosphate specific] activity"/>
    <property type="evidence" value="ECO:0000318"/>
    <property type="project" value="GO_Central"/>
</dbReference>
<dbReference type="GO" id="GO:0000287">
    <property type="term" value="F:magnesium ion binding"/>
    <property type="evidence" value="ECO:0000318"/>
    <property type="project" value="GO_Central"/>
</dbReference>
<dbReference type="GO" id="GO:0030145">
    <property type="term" value="F:manganese ion binding"/>
    <property type="evidence" value="ECO:0000318"/>
    <property type="project" value="GO_Central"/>
</dbReference>
<dbReference type="GO" id="GO:0016094">
    <property type="term" value="P:polyprenol biosynthetic process"/>
    <property type="evidence" value="ECO:0000318"/>
    <property type="project" value="GO_Central"/>
</dbReference>
<dbReference type="CDD" id="cd00475">
    <property type="entry name" value="Cis_IPPS"/>
    <property type="match status" value="1"/>
</dbReference>
<dbReference type="FunFam" id="3.40.1180.10:FF:000001">
    <property type="entry name" value="(2E,6E)-farnesyl-diphosphate-specific ditrans,polycis-undecaprenyl-diphosphate synthase"/>
    <property type="match status" value="1"/>
</dbReference>
<dbReference type="Gene3D" id="3.40.1180.10">
    <property type="entry name" value="Decaprenyl diphosphate synthase-like"/>
    <property type="match status" value="1"/>
</dbReference>
<dbReference type="HAMAP" id="MF_01139">
    <property type="entry name" value="ISPT"/>
    <property type="match status" value="1"/>
</dbReference>
<dbReference type="InterPro" id="IPR001441">
    <property type="entry name" value="UPP_synth-like"/>
</dbReference>
<dbReference type="InterPro" id="IPR018520">
    <property type="entry name" value="UPP_synth-like_CS"/>
</dbReference>
<dbReference type="InterPro" id="IPR036424">
    <property type="entry name" value="UPP_synth-like_sf"/>
</dbReference>
<dbReference type="NCBIfam" id="NF011405">
    <property type="entry name" value="PRK14830.1"/>
    <property type="match status" value="1"/>
</dbReference>
<dbReference type="NCBIfam" id="TIGR00055">
    <property type="entry name" value="uppS"/>
    <property type="match status" value="1"/>
</dbReference>
<dbReference type="PANTHER" id="PTHR10291:SF0">
    <property type="entry name" value="DEHYDRODOLICHYL DIPHOSPHATE SYNTHASE 2"/>
    <property type="match status" value="1"/>
</dbReference>
<dbReference type="PANTHER" id="PTHR10291">
    <property type="entry name" value="DEHYDRODOLICHYL DIPHOSPHATE SYNTHASE FAMILY MEMBER"/>
    <property type="match status" value="1"/>
</dbReference>
<dbReference type="Pfam" id="PF01255">
    <property type="entry name" value="Prenyltransf"/>
    <property type="match status" value="1"/>
</dbReference>
<dbReference type="SUPFAM" id="SSF64005">
    <property type="entry name" value="Undecaprenyl diphosphate synthase"/>
    <property type="match status" value="1"/>
</dbReference>
<dbReference type="PROSITE" id="PS01066">
    <property type="entry name" value="UPP_SYNTHASE"/>
    <property type="match status" value="1"/>
</dbReference>
<proteinExistence type="evidence at protein level"/>
<name>ISPT_BACSU</name>
<protein>
    <recommendedName>
        <fullName evidence="1">Isoprenyl transferase</fullName>
        <ecNumber evidence="1">2.5.1.-</ecNumber>
    </recommendedName>
</protein>
<evidence type="ECO:0000255" key="1">
    <source>
        <dbReference type="HAMAP-Rule" id="MF_01139"/>
    </source>
</evidence>
<evidence type="ECO:0007829" key="2">
    <source>
        <dbReference type="PDB" id="7JLI"/>
    </source>
</evidence>
<evidence type="ECO:0007829" key="3">
    <source>
        <dbReference type="PDB" id="7JLR"/>
    </source>
</evidence>
<gene>
    <name evidence="1" type="primary">uppS</name>
    <name type="synonym">yluA</name>
    <name type="ordered locus">BSU16530</name>
</gene>
<comment type="function">
    <text evidence="1">Catalyzes the condensation of isopentenyl diphosphate (IPP) with allylic pyrophosphates generating different type of terpenoids.</text>
</comment>
<comment type="cofactor">
    <cofactor evidence="1">
        <name>Mg(2+)</name>
        <dbReference type="ChEBI" id="CHEBI:18420"/>
    </cofactor>
    <text evidence="1">Binds 2 magnesium ions per subunit.</text>
</comment>
<comment type="subunit">
    <text evidence="1">Homodimer.</text>
</comment>
<comment type="similarity">
    <text evidence="1">Belongs to the UPP synthase family.</text>
</comment>